<reference key="1">
    <citation type="journal article" date="2009" name="J. Bacteriol.">
        <title>Complete genome sequence of the extremophilic Bacillus cereus strain Q1 with industrial applications.</title>
        <authorList>
            <person name="Xiong Z."/>
            <person name="Jiang Y."/>
            <person name="Qi D."/>
            <person name="Lu H."/>
            <person name="Yang F."/>
            <person name="Yang J."/>
            <person name="Chen L."/>
            <person name="Sun L."/>
            <person name="Xu X."/>
            <person name="Xue Y."/>
            <person name="Zhu Y."/>
            <person name="Jin Q."/>
        </authorList>
    </citation>
    <scope>NUCLEOTIDE SEQUENCE [LARGE SCALE GENOMIC DNA]</scope>
    <source>
        <strain>Q1</strain>
    </source>
</reference>
<accession>B9IYI8</accession>
<proteinExistence type="inferred from homology"/>
<dbReference type="EMBL" id="CP000227">
    <property type="protein sequence ID" value="ACM10550.1"/>
    <property type="molecule type" value="Genomic_DNA"/>
</dbReference>
<dbReference type="SMR" id="B9IYI8"/>
<dbReference type="KEGG" id="bcq:BCQ_0027"/>
<dbReference type="HOGENOM" id="CLU_140930_1_0_9"/>
<dbReference type="Proteomes" id="UP000000441">
    <property type="component" value="Chromosome"/>
</dbReference>
<dbReference type="GO" id="GO:0043590">
    <property type="term" value="C:bacterial nucleoid"/>
    <property type="evidence" value="ECO:0007669"/>
    <property type="project" value="UniProtKB-UniRule"/>
</dbReference>
<dbReference type="GO" id="GO:0005829">
    <property type="term" value="C:cytosol"/>
    <property type="evidence" value="ECO:0007669"/>
    <property type="project" value="TreeGrafter"/>
</dbReference>
<dbReference type="GO" id="GO:0003677">
    <property type="term" value="F:DNA binding"/>
    <property type="evidence" value="ECO:0007669"/>
    <property type="project" value="UniProtKB-UniRule"/>
</dbReference>
<dbReference type="FunFam" id="3.30.1310.10:FF:000002">
    <property type="entry name" value="Nucleoid-associated protein IKC_06587"/>
    <property type="match status" value="1"/>
</dbReference>
<dbReference type="Gene3D" id="3.30.1310.10">
    <property type="entry name" value="Nucleoid-associated protein YbaB-like domain"/>
    <property type="match status" value="1"/>
</dbReference>
<dbReference type="HAMAP" id="MF_00274">
    <property type="entry name" value="DNA_YbaB_EbfC"/>
    <property type="match status" value="1"/>
</dbReference>
<dbReference type="InterPro" id="IPR036894">
    <property type="entry name" value="YbaB-like_sf"/>
</dbReference>
<dbReference type="InterPro" id="IPR004401">
    <property type="entry name" value="YbaB/EbfC"/>
</dbReference>
<dbReference type="NCBIfam" id="TIGR00103">
    <property type="entry name" value="DNA_YbaB_EbfC"/>
    <property type="match status" value="1"/>
</dbReference>
<dbReference type="PANTHER" id="PTHR33449">
    <property type="entry name" value="NUCLEOID-ASSOCIATED PROTEIN YBAB"/>
    <property type="match status" value="1"/>
</dbReference>
<dbReference type="PANTHER" id="PTHR33449:SF1">
    <property type="entry name" value="NUCLEOID-ASSOCIATED PROTEIN YBAB"/>
    <property type="match status" value="1"/>
</dbReference>
<dbReference type="Pfam" id="PF02575">
    <property type="entry name" value="YbaB_DNA_bd"/>
    <property type="match status" value="1"/>
</dbReference>
<dbReference type="PIRSF" id="PIRSF004555">
    <property type="entry name" value="UCP004555"/>
    <property type="match status" value="1"/>
</dbReference>
<dbReference type="SUPFAM" id="SSF82607">
    <property type="entry name" value="YbaB-like"/>
    <property type="match status" value="1"/>
</dbReference>
<protein>
    <recommendedName>
        <fullName evidence="1">Nucleoid-associated protein BCQ_0027</fullName>
    </recommendedName>
</protein>
<organism>
    <name type="scientific">Bacillus cereus (strain Q1)</name>
    <dbReference type="NCBI Taxonomy" id="361100"/>
    <lineage>
        <taxon>Bacteria</taxon>
        <taxon>Bacillati</taxon>
        <taxon>Bacillota</taxon>
        <taxon>Bacilli</taxon>
        <taxon>Bacillales</taxon>
        <taxon>Bacillaceae</taxon>
        <taxon>Bacillus</taxon>
        <taxon>Bacillus cereus group</taxon>
    </lineage>
</organism>
<name>Y027_BACCQ</name>
<gene>
    <name type="ordered locus">BCQ_0027</name>
</gene>
<comment type="function">
    <text evidence="1">Binds to DNA and alters its conformation. May be involved in regulation of gene expression, nucleoid organization and DNA protection.</text>
</comment>
<comment type="subunit">
    <text evidence="1">Homodimer.</text>
</comment>
<comment type="subcellular location">
    <subcellularLocation>
        <location evidence="1">Cytoplasm</location>
        <location evidence="1">Nucleoid</location>
    </subcellularLocation>
</comment>
<comment type="similarity">
    <text evidence="1">Belongs to the YbaB/EbfC family.</text>
</comment>
<evidence type="ECO:0000255" key="1">
    <source>
        <dbReference type="HAMAP-Rule" id="MF_00274"/>
    </source>
</evidence>
<keyword id="KW-0963">Cytoplasm</keyword>
<keyword id="KW-0238">DNA-binding</keyword>
<feature type="chain" id="PRO_1000197642" description="Nucleoid-associated protein BCQ_0027">
    <location>
        <begin position="1"/>
        <end position="109"/>
    </location>
</feature>
<sequence>MMRGGMGNMNNMMKQMQKMQKEMAKAQEELGEKTVEGTAGGGMITVIANGHKQILEVKVKEEVVDPEDIEMLQDLVLAATNDALKKADELSNSTMGKFTKGLNLPGGMF</sequence>